<protein>
    <recommendedName>
        <fullName evidence="1">Porphobilinogen deaminase</fullName>
        <shortName evidence="1">PBG</shortName>
        <ecNumber evidence="1">2.5.1.61</ecNumber>
    </recommendedName>
    <alternativeName>
        <fullName evidence="1">Hydroxymethylbilane synthase</fullName>
        <shortName evidence="1">HMBS</shortName>
    </alternativeName>
    <alternativeName>
        <fullName evidence="1">Pre-uroporphyrinogen synthase</fullName>
    </alternativeName>
</protein>
<proteinExistence type="inferred from homology"/>
<feature type="chain" id="PRO_0000304256" description="Porphobilinogen deaminase">
    <location>
        <begin position="1"/>
        <end position="310"/>
    </location>
</feature>
<feature type="modified residue" description="S-(dipyrrolylmethanemethyl)cysteine" evidence="1">
    <location>
        <position position="241"/>
    </location>
</feature>
<sequence length="310" mass="34214">MPPRQLRIGTRASQLALWQANWVKSELEKRYPAMEVTLTKIKTMGDRILDVPLAQVGGKGLFVKEIEEAMLRGEIDIAVHSMKDVPTEFPEGLGLYCITEREDPRDAVVSRAARFSHLPPGARVGTSALRRQAQLLHARPDLEMVTIRGNVETRIRKLDEENLDAVILAAAGLKRLGLTQRVAEYLDVEFSIPAIGQGALGIECRLSDPVVTEAIAFFNHPDTSHAVRAERALLRRCQGGCQVPIAAHGTIRGGELRLVGLIAAVDGREFVRDEISGPVDQCEHLGEELADRLLSRGGRAILEEVYQREI</sequence>
<comment type="function">
    <text evidence="1">Tetrapolymerization of the monopyrrole PBG into the hydroxymethylbilane pre-uroporphyrinogen in several discrete steps.</text>
</comment>
<comment type="catalytic activity">
    <reaction evidence="1">
        <text>4 porphobilinogen + H2O = hydroxymethylbilane + 4 NH4(+)</text>
        <dbReference type="Rhea" id="RHEA:13185"/>
        <dbReference type="ChEBI" id="CHEBI:15377"/>
        <dbReference type="ChEBI" id="CHEBI:28938"/>
        <dbReference type="ChEBI" id="CHEBI:57845"/>
        <dbReference type="ChEBI" id="CHEBI:58126"/>
        <dbReference type="EC" id="2.5.1.61"/>
    </reaction>
</comment>
<comment type="cofactor">
    <cofactor evidence="1">
        <name>dipyrromethane</name>
        <dbReference type="ChEBI" id="CHEBI:60342"/>
    </cofactor>
    <text evidence="1">Binds 1 dipyrromethane group covalently.</text>
</comment>
<comment type="pathway">
    <text evidence="1">Porphyrin-containing compound metabolism; protoporphyrin-IX biosynthesis; coproporphyrinogen-III from 5-aminolevulinate: step 2/4.</text>
</comment>
<comment type="subunit">
    <text evidence="1">Monomer.</text>
</comment>
<comment type="miscellaneous">
    <text evidence="1">The porphobilinogen subunits are added to the dipyrromethane group.</text>
</comment>
<comment type="similarity">
    <text evidence="1">Belongs to the HMBS family.</text>
</comment>
<name>HEM3_PELPD</name>
<evidence type="ECO:0000255" key="1">
    <source>
        <dbReference type="HAMAP-Rule" id="MF_00260"/>
    </source>
</evidence>
<gene>
    <name evidence="1" type="primary">hemC</name>
    <name type="ordered locus">Ppro_3375</name>
</gene>
<dbReference type="EC" id="2.5.1.61" evidence="1"/>
<dbReference type="EMBL" id="CP000482">
    <property type="protein sequence ID" value="ABL00968.1"/>
    <property type="molecule type" value="Genomic_DNA"/>
</dbReference>
<dbReference type="RefSeq" id="WP_011737184.1">
    <property type="nucleotide sequence ID" value="NC_008609.1"/>
</dbReference>
<dbReference type="SMR" id="A1AUE7"/>
<dbReference type="STRING" id="338966.Ppro_3375"/>
<dbReference type="KEGG" id="ppd:Ppro_3375"/>
<dbReference type="eggNOG" id="COG0181">
    <property type="taxonomic scope" value="Bacteria"/>
</dbReference>
<dbReference type="HOGENOM" id="CLU_019704_0_2_7"/>
<dbReference type="OrthoDB" id="9810298at2"/>
<dbReference type="UniPathway" id="UPA00251">
    <property type="reaction ID" value="UER00319"/>
</dbReference>
<dbReference type="Proteomes" id="UP000006732">
    <property type="component" value="Chromosome"/>
</dbReference>
<dbReference type="GO" id="GO:0005737">
    <property type="term" value="C:cytoplasm"/>
    <property type="evidence" value="ECO:0007669"/>
    <property type="project" value="TreeGrafter"/>
</dbReference>
<dbReference type="GO" id="GO:0004418">
    <property type="term" value="F:hydroxymethylbilane synthase activity"/>
    <property type="evidence" value="ECO:0007669"/>
    <property type="project" value="UniProtKB-UniRule"/>
</dbReference>
<dbReference type="GO" id="GO:0006782">
    <property type="term" value="P:protoporphyrinogen IX biosynthetic process"/>
    <property type="evidence" value="ECO:0007669"/>
    <property type="project" value="UniProtKB-UniRule"/>
</dbReference>
<dbReference type="CDD" id="cd13646">
    <property type="entry name" value="PBP2_EcHMBS_like"/>
    <property type="match status" value="1"/>
</dbReference>
<dbReference type="FunFam" id="3.30.160.40:FF:000002">
    <property type="entry name" value="Porphobilinogen deaminase"/>
    <property type="match status" value="1"/>
</dbReference>
<dbReference type="FunFam" id="3.40.190.10:FF:000004">
    <property type="entry name" value="Porphobilinogen deaminase"/>
    <property type="match status" value="1"/>
</dbReference>
<dbReference type="FunFam" id="3.40.190.10:FF:000005">
    <property type="entry name" value="Porphobilinogen deaminase"/>
    <property type="match status" value="1"/>
</dbReference>
<dbReference type="Gene3D" id="3.40.190.10">
    <property type="entry name" value="Periplasmic binding protein-like II"/>
    <property type="match status" value="2"/>
</dbReference>
<dbReference type="Gene3D" id="3.30.160.40">
    <property type="entry name" value="Porphobilinogen deaminase, C-terminal domain"/>
    <property type="match status" value="1"/>
</dbReference>
<dbReference type="HAMAP" id="MF_00260">
    <property type="entry name" value="Porphobil_deam"/>
    <property type="match status" value="1"/>
</dbReference>
<dbReference type="InterPro" id="IPR000860">
    <property type="entry name" value="HemC"/>
</dbReference>
<dbReference type="InterPro" id="IPR022419">
    <property type="entry name" value="Porphobilin_deaminase_cofac_BS"/>
</dbReference>
<dbReference type="InterPro" id="IPR022417">
    <property type="entry name" value="Porphobilin_deaminase_N"/>
</dbReference>
<dbReference type="InterPro" id="IPR022418">
    <property type="entry name" value="Porphobilinogen_deaminase_C"/>
</dbReference>
<dbReference type="InterPro" id="IPR036803">
    <property type="entry name" value="Porphobilinogen_deaminase_C_sf"/>
</dbReference>
<dbReference type="NCBIfam" id="TIGR00212">
    <property type="entry name" value="hemC"/>
    <property type="match status" value="1"/>
</dbReference>
<dbReference type="PANTHER" id="PTHR11557">
    <property type="entry name" value="PORPHOBILINOGEN DEAMINASE"/>
    <property type="match status" value="1"/>
</dbReference>
<dbReference type="PANTHER" id="PTHR11557:SF0">
    <property type="entry name" value="PORPHOBILINOGEN DEAMINASE"/>
    <property type="match status" value="1"/>
</dbReference>
<dbReference type="Pfam" id="PF01379">
    <property type="entry name" value="Porphobil_deam"/>
    <property type="match status" value="1"/>
</dbReference>
<dbReference type="Pfam" id="PF03900">
    <property type="entry name" value="Porphobil_deamC"/>
    <property type="match status" value="1"/>
</dbReference>
<dbReference type="PIRSF" id="PIRSF001438">
    <property type="entry name" value="4pyrrol_synth_OHMeBilane_synth"/>
    <property type="match status" value="1"/>
</dbReference>
<dbReference type="PRINTS" id="PR00151">
    <property type="entry name" value="PORPHBDMNASE"/>
</dbReference>
<dbReference type="SUPFAM" id="SSF53850">
    <property type="entry name" value="Periplasmic binding protein-like II"/>
    <property type="match status" value="1"/>
</dbReference>
<dbReference type="SUPFAM" id="SSF54782">
    <property type="entry name" value="Porphobilinogen deaminase (hydroxymethylbilane synthase), C-terminal domain"/>
    <property type="match status" value="1"/>
</dbReference>
<dbReference type="PROSITE" id="PS00533">
    <property type="entry name" value="PORPHOBILINOGEN_DEAM"/>
    <property type="match status" value="1"/>
</dbReference>
<organism>
    <name type="scientific">Pelobacter propionicus (strain DSM 2379 / NBRC 103807 / OttBd1)</name>
    <dbReference type="NCBI Taxonomy" id="338966"/>
    <lineage>
        <taxon>Bacteria</taxon>
        <taxon>Pseudomonadati</taxon>
        <taxon>Thermodesulfobacteriota</taxon>
        <taxon>Desulfuromonadia</taxon>
        <taxon>Desulfuromonadales</taxon>
        <taxon>Desulfuromonadaceae</taxon>
        <taxon>Pelobacter</taxon>
    </lineage>
</organism>
<reference key="1">
    <citation type="submission" date="2006-10" db="EMBL/GenBank/DDBJ databases">
        <title>Complete sequence of chromosome of Pelobacter propionicus DSM 2379.</title>
        <authorList>
            <consortium name="US DOE Joint Genome Institute"/>
            <person name="Copeland A."/>
            <person name="Lucas S."/>
            <person name="Lapidus A."/>
            <person name="Barry K."/>
            <person name="Detter J.C."/>
            <person name="Glavina del Rio T."/>
            <person name="Hammon N."/>
            <person name="Israni S."/>
            <person name="Dalin E."/>
            <person name="Tice H."/>
            <person name="Pitluck S."/>
            <person name="Saunders E."/>
            <person name="Brettin T."/>
            <person name="Bruce D."/>
            <person name="Han C."/>
            <person name="Tapia R."/>
            <person name="Schmutz J."/>
            <person name="Larimer F."/>
            <person name="Land M."/>
            <person name="Hauser L."/>
            <person name="Kyrpides N."/>
            <person name="Kim E."/>
            <person name="Lovley D."/>
            <person name="Richardson P."/>
        </authorList>
    </citation>
    <scope>NUCLEOTIDE SEQUENCE [LARGE SCALE GENOMIC DNA]</scope>
    <source>
        <strain>DSM 2379 / NBRC 103807 / OttBd1</strain>
    </source>
</reference>
<accession>A1AUE7</accession>
<keyword id="KW-0627">Porphyrin biosynthesis</keyword>
<keyword id="KW-1185">Reference proteome</keyword>
<keyword id="KW-0808">Transferase</keyword>